<evidence type="ECO:0000250" key="1">
    <source>
        <dbReference type="UniProtKB" id="D3GE74"/>
    </source>
</evidence>
<evidence type="ECO:0000255" key="2"/>
<evidence type="ECO:0000255" key="3">
    <source>
        <dbReference type="PROSITE-ProRule" id="PRU00434"/>
    </source>
</evidence>
<evidence type="ECO:0000255" key="4">
    <source>
        <dbReference type="PROSITE-ProRule" id="PRU00498"/>
    </source>
</evidence>
<evidence type="ECO:0000256" key="5">
    <source>
        <dbReference type="SAM" id="MobiDB-lite"/>
    </source>
</evidence>
<evidence type="ECO:0000269" key="6">
    <source>
    </source>
</evidence>
<evidence type="ECO:0000303" key="7">
    <source>
    </source>
</evidence>
<evidence type="ECO:0000305" key="8"/>
<dbReference type="EC" id="7.6.2.-"/>
<dbReference type="EMBL" id="KR612265">
    <property type="protein sequence ID" value="ALC79555.1"/>
    <property type="molecule type" value="mRNA"/>
</dbReference>
<dbReference type="SMR" id="A0A0M3R8G1"/>
<dbReference type="GlyCosmos" id="A0A0M3R8G1">
    <property type="glycosylation" value="3 sites, No reported glycans"/>
</dbReference>
<dbReference type="GO" id="GO:0005886">
    <property type="term" value="C:plasma membrane"/>
    <property type="evidence" value="ECO:0007669"/>
    <property type="project" value="UniProtKB-SubCell"/>
</dbReference>
<dbReference type="GO" id="GO:0140359">
    <property type="term" value="F:ABC-type transporter activity"/>
    <property type="evidence" value="ECO:0007669"/>
    <property type="project" value="InterPro"/>
</dbReference>
<dbReference type="GO" id="GO:0005524">
    <property type="term" value="F:ATP binding"/>
    <property type="evidence" value="ECO:0007669"/>
    <property type="project" value="UniProtKB-KW"/>
</dbReference>
<dbReference type="GO" id="GO:0016887">
    <property type="term" value="F:ATP hydrolysis activity"/>
    <property type="evidence" value="ECO:0007669"/>
    <property type="project" value="InterPro"/>
</dbReference>
<dbReference type="GO" id="GO:0009610">
    <property type="term" value="P:response to symbiotic fungus"/>
    <property type="evidence" value="ECO:0000270"/>
    <property type="project" value="UniProtKB"/>
</dbReference>
<dbReference type="CDD" id="cd03213">
    <property type="entry name" value="ABCG_EPDR"/>
    <property type="match status" value="1"/>
</dbReference>
<dbReference type="FunFam" id="3.40.50.300:FF:000530">
    <property type="entry name" value="ABC transporter G family member 6"/>
    <property type="match status" value="1"/>
</dbReference>
<dbReference type="Gene3D" id="3.40.50.300">
    <property type="entry name" value="P-loop containing nucleotide triphosphate hydrolases"/>
    <property type="match status" value="1"/>
</dbReference>
<dbReference type="InterPro" id="IPR003593">
    <property type="entry name" value="AAA+_ATPase"/>
</dbReference>
<dbReference type="InterPro" id="IPR013525">
    <property type="entry name" value="ABC2_TM"/>
</dbReference>
<dbReference type="InterPro" id="IPR003439">
    <property type="entry name" value="ABC_transporter-like_ATP-bd"/>
</dbReference>
<dbReference type="InterPro" id="IPR017871">
    <property type="entry name" value="ABC_transporter-like_CS"/>
</dbReference>
<dbReference type="InterPro" id="IPR050352">
    <property type="entry name" value="ABCG_transporters"/>
</dbReference>
<dbReference type="InterPro" id="IPR027417">
    <property type="entry name" value="P-loop_NTPase"/>
</dbReference>
<dbReference type="PANTHER" id="PTHR48041">
    <property type="entry name" value="ABC TRANSPORTER G FAMILY MEMBER 28"/>
    <property type="match status" value="1"/>
</dbReference>
<dbReference type="PANTHER" id="PTHR48041:SF73">
    <property type="entry name" value="ABC TRANSPORTER G FAMILY MEMBER STR"/>
    <property type="match status" value="1"/>
</dbReference>
<dbReference type="Pfam" id="PF01061">
    <property type="entry name" value="ABC2_membrane"/>
    <property type="match status" value="1"/>
</dbReference>
<dbReference type="Pfam" id="PF00005">
    <property type="entry name" value="ABC_tran"/>
    <property type="match status" value="1"/>
</dbReference>
<dbReference type="SMART" id="SM00382">
    <property type="entry name" value="AAA"/>
    <property type="match status" value="1"/>
</dbReference>
<dbReference type="SUPFAM" id="SSF52540">
    <property type="entry name" value="P-loop containing nucleoside triphosphate hydrolases"/>
    <property type="match status" value="1"/>
</dbReference>
<dbReference type="PROSITE" id="PS00211">
    <property type="entry name" value="ABC_TRANSPORTER_1"/>
    <property type="match status" value="1"/>
</dbReference>
<dbReference type="PROSITE" id="PS50893">
    <property type="entry name" value="ABC_TRANSPORTER_2"/>
    <property type="match status" value="1"/>
</dbReference>
<gene>
    <name evidence="7" type="primary">STR</name>
</gene>
<organism>
    <name type="scientific">Petunia hybrida</name>
    <name type="common">Petunia</name>
    <dbReference type="NCBI Taxonomy" id="4102"/>
    <lineage>
        <taxon>Eukaryota</taxon>
        <taxon>Viridiplantae</taxon>
        <taxon>Streptophyta</taxon>
        <taxon>Embryophyta</taxon>
        <taxon>Tracheophyta</taxon>
        <taxon>Spermatophyta</taxon>
        <taxon>Magnoliopsida</taxon>
        <taxon>eudicotyledons</taxon>
        <taxon>Gunneridae</taxon>
        <taxon>Pentapetalae</taxon>
        <taxon>asterids</taxon>
        <taxon>lamiids</taxon>
        <taxon>Solanales</taxon>
        <taxon>Solanaceae</taxon>
        <taxon>Petunioideae</taxon>
        <taxon>Petunia</taxon>
    </lineage>
</organism>
<name>STR1_PETHY</name>
<proteinExistence type="evidence at transcript level"/>
<accession>A0A0M3R8G1</accession>
<sequence length="830" mass="93660">MAKFKRTDTNRSLENLLDQDKSAQMSKNGGSLAKQPTRKLIPGHGLEFNNLSYSVIKKVKKDGVWINKEAYLLNDISGQALRGEIMAIMGPSGAGKSTFLDALAGRIARGSLEGTVRIDGKPVTTSYMKMISSYVMQDDQLFPMLTVFETFMFAAEVRLPPSISRAEKKKRVHELLEQLGLTSATHTYIGDEGRRGVSGGERRRVSIGIDIIHKPSLLFLDEPTSGLDSTSAFSVVEKVKDIAKSGSIVLMTIHQPSFRIQMLLDRITVLARGRLVYLGSPTGVAAFLAGFARPVPDGENSLEYLLDVIKEYDESTVGLDPLVLYQRDGIKPDQAAKTPVRKPPKTPKIPRTPYAKSPWTKHISLKSSHFSTGNMNSQRDPKDHSDQQSDVNNFDYEDDDDEDEFDKSLERRAPHTPMSMQSGVYPRLASHFYKDFSVWLYNGVKGTPRRPPTWNNNGAIKAPISGSGFKSMSSSQFSMTQQTPGPGNKTPIFTPGRDVIEYSSYNPSYEEVFEIEEVLDEPVHRHKFANPWVREVLVLSWRTTLNVIRTPELFLSREIVLTVMGLVLSSFFKKLSHFDFKTINHLLNFYIFTICLVFFSSNDAVPTFIQERFIFIRETSHNAYRASSYVISSLIVYLPFFAIQGFTFAGITQYILHLNSSILSFWLILYSSLVTSNAYVMLVSALVPSYITGYAVVIATTALFFLTCGFFLKRTQIPLVWRWLHYISAIKYPFEALLINEFKGSKHCYDGDLSDLSPGPLGDVKFSALRNNSRAALPQNCTLIGEDVLFSMDIREENIWLDIVILLAWGVLYRLFFYVVLRFYSKNERK</sequence>
<feature type="chain" id="PRO_0000450020" description="ABC transporter G family member STR">
    <location>
        <begin position="1"/>
        <end position="830"/>
    </location>
</feature>
<feature type="topological domain" description="Cytoplasmic" evidence="8">
    <location>
        <begin position="1"/>
        <end position="551"/>
    </location>
</feature>
<feature type="transmembrane region" description="Helical; Name=1" evidence="2">
    <location>
        <begin position="552"/>
        <end position="572"/>
    </location>
</feature>
<feature type="topological domain" description="Extracellular" evidence="8">
    <location>
        <begin position="573"/>
        <end position="588"/>
    </location>
</feature>
<feature type="transmembrane region" description="Helical; Name=2" evidence="2">
    <location>
        <begin position="589"/>
        <end position="609"/>
    </location>
</feature>
<feature type="topological domain" description="Cytoplasmic" evidence="8">
    <location>
        <begin position="610"/>
        <end position="630"/>
    </location>
</feature>
<feature type="transmembrane region" description="Helical; Name=3" evidence="2">
    <location>
        <begin position="631"/>
        <end position="651"/>
    </location>
</feature>
<feature type="topological domain" description="Extracellular" evidence="8">
    <location>
        <begin position="652"/>
        <end position="661"/>
    </location>
</feature>
<feature type="transmembrane region" description="Helical; Name=4" evidence="2">
    <location>
        <begin position="662"/>
        <end position="682"/>
    </location>
</feature>
<feature type="topological domain" description="Cytoplasmic" evidence="8">
    <location>
        <begin position="683"/>
        <end position="690"/>
    </location>
</feature>
<feature type="transmembrane region" description="Helical; Name=5" evidence="2">
    <location>
        <begin position="691"/>
        <end position="711"/>
    </location>
</feature>
<feature type="topological domain" description="Extracellular" evidence="8">
    <location>
        <begin position="712"/>
        <end position="798"/>
    </location>
</feature>
<feature type="transmembrane region" description="Helical; Name=6" evidence="2">
    <location>
        <begin position="799"/>
        <end position="819"/>
    </location>
</feature>
<feature type="topological domain" description="Cytoplasmic" evidence="8">
    <location>
        <begin position="820"/>
        <end position="830"/>
    </location>
</feature>
<feature type="domain" description="ABC transporter" evidence="3">
    <location>
        <begin position="46"/>
        <end position="297"/>
    </location>
</feature>
<feature type="region of interest" description="Disordered" evidence="5">
    <location>
        <begin position="333"/>
        <end position="356"/>
    </location>
</feature>
<feature type="region of interest" description="Disordered" evidence="5">
    <location>
        <begin position="368"/>
        <end position="422"/>
    </location>
</feature>
<feature type="region of interest" description="Disordered" evidence="5">
    <location>
        <begin position="471"/>
        <end position="491"/>
    </location>
</feature>
<feature type="compositionally biased region" description="Polar residues" evidence="5">
    <location>
        <begin position="368"/>
        <end position="378"/>
    </location>
</feature>
<feature type="compositionally biased region" description="Acidic residues" evidence="5">
    <location>
        <begin position="395"/>
        <end position="405"/>
    </location>
</feature>
<feature type="compositionally biased region" description="Low complexity" evidence="5">
    <location>
        <begin position="471"/>
        <end position="483"/>
    </location>
</feature>
<feature type="binding site" evidence="3">
    <location>
        <begin position="90"/>
        <end position="97"/>
    </location>
    <ligand>
        <name>ATP</name>
        <dbReference type="ChEBI" id="CHEBI:30616"/>
    </ligand>
</feature>
<feature type="glycosylation site" description="N-linked (GlcNAc...) asparagine" evidence="4">
    <location>
        <position position="659"/>
    </location>
</feature>
<feature type="glycosylation site" description="N-linked (GlcNAc...) asparagine" evidence="4">
    <location>
        <position position="771"/>
    </location>
</feature>
<feature type="glycosylation site" description="N-linked (GlcNAc...) asparagine" evidence="4">
    <location>
        <position position="780"/>
    </location>
</feature>
<reference key="1">
    <citation type="journal article" date="2015" name="Plant Physiol.">
        <title>The Petunia GRAS transcription factor ATA/RAM1 regulates symbiotic gene expression and fungal morphogenesis in arbuscular mycorrhiza.</title>
        <authorList>
            <person name="Rich M.K."/>
            <person name="Schorderet M."/>
            <person name="Bapaume L."/>
            <person name="Falquet L."/>
            <person name="Morel P."/>
            <person name="Vandenbussche M."/>
            <person name="Reinhardt D."/>
        </authorList>
    </citation>
    <scope>NUCLEOTIDE SEQUENCE [MRNA]</scope>
    <scope>INDUCTION BY RAM1 AND RHIZOPHAGUS IRREGULARIS</scope>
    <source>
        <strain>cv. W138</strain>
    </source>
</reference>
<keyword id="KW-0067">ATP-binding</keyword>
<keyword id="KW-1003">Cell membrane</keyword>
<keyword id="KW-0325">Glycoprotein</keyword>
<keyword id="KW-0378">Hydrolase</keyword>
<keyword id="KW-0472">Membrane</keyword>
<keyword id="KW-0547">Nucleotide-binding</keyword>
<keyword id="KW-1278">Translocase</keyword>
<keyword id="KW-0812">Transmembrane</keyword>
<keyword id="KW-1133">Transmembrane helix</keyword>
<keyword id="KW-0813">Transport</keyword>
<protein>
    <recommendedName>
        <fullName evidence="7">ABC transporter G family member STR</fullName>
        <ecNumber>7.6.2.-</ecNumber>
    </recommendedName>
    <alternativeName>
        <fullName evidence="7">Protein STUNTED ARBUSCULE</fullName>
    </alternativeName>
</protein>
<comment type="function">
    <text evidence="1">Together with STR2, required for arbuscule development in arbuscular mycorrhizal (AM) symbiosis.</text>
</comment>
<comment type="subunit">
    <text evidence="1">Heterodimerizes with STR2; the resulting transporter is located in the peri-arbuscular membrane.</text>
</comment>
<comment type="subcellular location">
    <subcellularLocation>
        <location evidence="1">Cell membrane</location>
        <topology evidence="2">Multi-pass membrane protein</topology>
    </subcellularLocation>
    <text evidence="1">Located in the peri-arbuscular membrane of arbuscular mycorrhiza (AM).</text>
</comment>
<comment type="induction">
    <text evidence="6">Regulated by RAM1 during arbuscular mycorrhiza (AM) formation after inoculation with Rhizophagus irregularis.</text>
</comment>
<comment type="similarity">
    <text evidence="8">Belongs to the ABC transporter superfamily. ABCG family. Stunted arbuscule (STR) subfamily.</text>
</comment>